<feature type="chain" id="PRO_1000083211" description="Glycine dehydrogenase (decarboxylating)">
    <location>
        <begin position="1"/>
        <end position="957"/>
    </location>
</feature>
<feature type="modified residue" description="N6-(pyridoxal phosphate)lysine" evidence="1">
    <location>
        <position position="708"/>
    </location>
</feature>
<dbReference type="EC" id="1.4.4.2" evidence="1"/>
<dbReference type="EMBL" id="CP000880">
    <property type="protein sequence ID" value="ABX24370.1"/>
    <property type="molecule type" value="Genomic_DNA"/>
</dbReference>
<dbReference type="SMR" id="A9MRH2"/>
<dbReference type="STRING" id="41514.SARI_04598"/>
<dbReference type="KEGG" id="ses:SARI_04598"/>
<dbReference type="HOGENOM" id="CLU_004620_3_2_6"/>
<dbReference type="Proteomes" id="UP000002084">
    <property type="component" value="Chromosome"/>
</dbReference>
<dbReference type="GO" id="GO:0005829">
    <property type="term" value="C:cytosol"/>
    <property type="evidence" value="ECO:0007669"/>
    <property type="project" value="TreeGrafter"/>
</dbReference>
<dbReference type="GO" id="GO:0005960">
    <property type="term" value="C:glycine cleavage complex"/>
    <property type="evidence" value="ECO:0007669"/>
    <property type="project" value="TreeGrafter"/>
</dbReference>
<dbReference type="GO" id="GO:0016594">
    <property type="term" value="F:glycine binding"/>
    <property type="evidence" value="ECO:0007669"/>
    <property type="project" value="TreeGrafter"/>
</dbReference>
<dbReference type="GO" id="GO:0004375">
    <property type="term" value="F:glycine dehydrogenase (decarboxylating) activity"/>
    <property type="evidence" value="ECO:0007669"/>
    <property type="project" value="UniProtKB-EC"/>
</dbReference>
<dbReference type="GO" id="GO:0030170">
    <property type="term" value="F:pyridoxal phosphate binding"/>
    <property type="evidence" value="ECO:0007669"/>
    <property type="project" value="TreeGrafter"/>
</dbReference>
<dbReference type="GO" id="GO:0019464">
    <property type="term" value="P:glycine decarboxylation via glycine cleavage system"/>
    <property type="evidence" value="ECO:0007669"/>
    <property type="project" value="UniProtKB-UniRule"/>
</dbReference>
<dbReference type="CDD" id="cd00613">
    <property type="entry name" value="GDC-P"/>
    <property type="match status" value="2"/>
</dbReference>
<dbReference type="FunFam" id="3.40.640.10:FF:000005">
    <property type="entry name" value="Glycine dehydrogenase (decarboxylating), mitochondrial"/>
    <property type="match status" value="1"/>
</dbReference>
<dbReference type="FunFam" id="3.90.1150.10:FF:000007">
    <property type="entry name" value="Glycine dehydrogenase (decarboxylating), mitochondrial"/>
    <property type="match status" value="1"/>
</dbReference>
<dbReference type="FunFam" id="3.40.640.10:FF:000007">
    <property type="entry name" value="glycine dehydrogenase (Decarboxylating), mitochondrial"/>
    <property type="match status" value="1"/>
</dbReference>
<dbReference type="Gene3D" id="3.90.1150.10">
    <property type="entry name" value="Aspartate Aminotransferase, domain 1"/>
    <property type="match status" value="1"/>
</dbReference>
<dbReference type="Gene3D" id="3.40.640.10">
    <property type="entry name" value="Type I PLP-dependent aspartate aminotransferase-like (Major domain)"/>
    <property type="match status" value="2"/>
</dbReference>
<dbReference type="HAMAP" id="MF_00711">
    <property type="entry name" value="GcvP"/>
    <property type="match status" value="1"/>
</dbReference>
<dbReference type="InterPro" id="IPR003437">
    <property type="entry name" value="GcvP"/>
</dbReference>
<dbReference type="InterPro" id="IPR049316">
    <property type="entry name" value="GDC-P_C"/>
</dbReference>
<dbReference type="InterPro" id="IPR049315">
    <property type="entry name" value="GDC-P_N"/>
</dbReference>
<dbReference type="InterPro" id="IPR020581">
    <property type="entry name" value="GDC_P"/>
</dbReference>
<dbReference type="InterPro" id="IPR015424">
    <property type="entry name" value="PyrdxlP-dep_Trfase"/>
</dbReference>
<dbReference type="InterPro" id="IPR015421">
    <property type="entry name" value="PyrdxlP-dep_Trfase_major"/>
</dbReference>
<dbReference type="InterPro" id="IPR015422">
    <property type="entry name" value="PyrdxlP-dep_Trfase_small"/>
</dbReference>
<dbReference type="NCBIfam" id="TIGR00461">
    <property type="entry name" value="gcvP"/>
    <property type="match status" value="1"/>
</dbReference>
<dbReference type="NCBIfam" id="NF003346">
    <property type="entry name" value="PRK04366.1"/>
    <property type="match status" value="1"/>
</dbReference>
<dbReference type="PANTHER" id="PTHR11773:SF13">
    <property type="entry name" value="GLYCINE DEHYDROGENASE (DECARBOXYLATING)"/>
    <property type="match status" value="1"/>
</dbReference>
<dbReference type="PANTHER" id="PTHR11773">
    <property type="entry name" value="GLYCINE DEHYDROGENASE, DECARBOXYLATING"/>
    <property type="match status" value="1"/>
</dbReference>
<dbReference type="Pfam" id="PF21478">
    <property type="entry name" value="GcvP2_C"/>
    <property type="match status" value="1"/>
</dbReference>
<dbReference type="Pfam" id="PF02347">
    <property type="entry name" value="GDC-P"/>
    <property type="match status" value="2"/>
</dbReference>
<dbReference type="SUPFAM" id="SSF53383">
    <property type="entry name" value="PLP-dependent transferases"/>
    <property type="match status" value="2"/>
</dbReference>
<accession>A9MRH2</accession>
<protein>
    <recommendedName>
        <fullName evidence="1">Glycine dehydrogenase (decarboxylating)</fullName>
        <ecNumber evidence="1">1.4.4.2</ecNumber>
    </recommendedName>
    <alternativeName>
        <fullName evidence="1">Glycine cleavage system P-protein</fullName>
    </alternativeName>
    <alternativeName>
        <fullName evidence="1">Glycine decarboxylase</fullName>
    </alternativeName>
    <alternativeName>
        <fullName evidence="1">Glycine dehydrogenase (aminomethyl-transferring)</fullName>
    </alternativeName>
</protein>
<organism>
    <name type="scientific">Salmonella arizonae (strain ATCC BAA-731 / CDC346-86 / RSK2980)</name>
    <dbReference type="NCBI Taxonomy" id="41514"/>
    <lineage>
        <taxon>Bacteria</taxon>
        <taxon>Pseudomonadati</taxon>
        <taxon>Pseudomonadota</taxon>
        <taxon>Gammaproteobacteria</taxon>
        <taxon>Enterobacterales</taxon>
        <taxon>Enterobacteriaceae</taxon>
        <taxon>Salmonella</taxon>
    </lineage>
</organism>
<name>GCSP_SALAR</name>
<gene>
    <name evidence="1" type="primary">gcvP</name>
    <name type="ordered locus">SARI_04598</name>
</gene>
<proteinExistence type="inferred from homology"/>
<evidence type="ECO:0000255" key="1">
    <source>
        <dbReference type="HAMAP-Rule" id="MF_00711"/>
    </source>
</evidence>
<reference key="1">
    <citation type="submission" date="2007-11" db="EMBL/GenBank/DDBJ databases">
        <authorList>
            <consortium name="The Salmonella enterica serovar Arizonae Genome Sequencing Project"/>
            <person name="McClelland M."/>
            <person name="Sanderson E.K."/>
            <person name="Porwollik S."/>
            <person name="Spieth J."/>
            <person name="Clifton W.S."/>
            <person name="Fulton R."/>
            <person name="Chunyan W."/>
            <person name="Wollam A."/>
            <person name="Shah N."/>
            <person name="Pepin K."/>
            <person name="Bhonagiri V."/>
            <person name="Nash W."/>
            <person name="Johnson M."/>
            <person name="Thiruvilangam P."/>
            <person name="Wilson R."/>
        </authorList>
    </citation>
    <scope>NUCLEOTIDE SEQUENCE [LARGE SCALE GENOMIC DNA]</scope>
    <source>
        <strain>ATCC BAA-731 / CDC346-86 / RSK2980</strain>
    </source>
</reference>
<sequence length="957" mass="104363">MTQTLSQLENSGAFIERHIGPDAGQQQEMLNAVSAESLNALIGQIVPKDIQLANPPQVGEAATEYAALAELKAIVGRNKRFTSYIGMGYTAVQLPPVILRNMLENPGWYTAYTPYQPEVSQGRLEALLNFQQVTLDLTGLDMASASLLDEATAAAEAMAMAKRVSKLKNANRFFVASDVHPQTLDVVRTRAKTFGFDVIVDDAAKALDHQNVFGVLLQQVGSTGEIHDYSALISKLKARKVIVSVAADFMALVLLTAPGKQGADIVFGSAQRFGVPMGYGGPHAAFFAAIDEFKRSMPGRIIGVSKDAAGNAALRMAMQTREQHIRREKANSNICTSQVLLANIASLYAVYHGPVGLKRIAQRIHRLTDILAAGLQQKGLKLRHAHYFDTLCVEVADKAAVLARAEAAEINLRSDIHNAVGITLDETTTRDNVLQLFTILLGDDHGLNIETLDKDVALDSRSIQQSMLRDDAVLTHPVFNRYHSETEMMRYMHSLERKDLALNQAMIPLGSCTMKLNAAAEMIPITWPEFAELHPFCPPEQAEGYQQMISQLSDWLVKLTGYDAVCMQPNSGAQGEYAGLLAIRHYHESRNEGHRDICLIPASAHGTNPASAHMAGMQVVVVACDKNGNIDLADLRAKAELHANNLSCIMVTYPSTHGVYEETIRDVCDIVHQFGGQVYLDGANMNAQVGITSPGFIGADVSHLNLHKTFCIPHGGGGPGMGPIGVKAHLAPFVPGHSVVQIEGMLTRQGAVSAAPFGSASILPISWMYIRMMGAEGLKQASQVAILNANYIASRLKDAYPILYTGRDGRVAHECILDIRPLKEETGISELDIAKRLIDYGFHAPTMSFPVAGTLMVEPTESEGKAELDRFINAMLAIRAEIERVKAGEWPLEDNPLVNAPHTQNELAAEWNHSYSREVAVFPAGVANKYWPTVKRLDDVYGDRNLFCSCVPMSEYQ</sequence>
<keyword id="KW-0560">Oxidoreductase</keyword>
<keyword id="KW-0663">Pyridoxal phosphate</keyword>
<keyword id="KW-1185">Reference proteome</keyword>
<comment type="function">
    <text evidence="1">The glycine cleavage system catalyzes the degradation of glycine. The P protein binds the alpha-amino group of glycine through its pyridoxal phosphate cofactor; CO(2) is released and the remaining methylamine moiety is then transferred to the lipoamide cofactor of the H protein.</text>
</comment>
<comment type="catalytic activity">
    <reaction evidence="1">
        <text>N(6)-[(R)-lipoyl]-L-lysyl-[glycine-cleavage complex H protein] + glycine + H(+) = N(6)-[(R)-S(8)-aminomethyldihydrolipoyl]-L-lysyl-[glycine-cleavage complex H protein] + CO2</text>
        <dbReference type="Rhea" id="RHEA:24304"/>
        <dbReference type="Rhea" id="RHEA-COMP:10494"/>
        <dbReference type="Rhea" id="RHEA-COMP:10495"/>
        <dbReference type="ChEBI" id="CHEBI:15378"/>
        <dbReference type="ChEBI" id="CHEBI:16526"/>
        <dbReference type="ChEBI" id="CHEBI:57305"/>
        <dbReference type="ChEBI" id="CHEBI:83099"/>
        <dbReference type="ChEBI" id="CHEBI:83143"/>
        <dbReference type="EC" id="1.4.4.2"/>
    </reaction>
</comment>
<comment type="cofactor">
    <cofactor evidence="1">
        <name>pyridoxal 5'-phosphate</name>
        <dbReference type="ChEBI" id="CHEBI:597326"/>
    </cofactor>
</comment>
<comment type="subunit">
    <text evidence="1">The glycine cleavage system is composed of four proteins: P, T, L and H.</text>
</comment>
<comment type="similarity">
    <text evidence="1">Belongs to the GcvP family.</text>
</comment>